<comment type="catalytic activity">
    <reaction>
        <text>a primary alcohol + NAD(+) = an aldehyde + NADH + H(+)</text>
        <dbReference type="Rhea" id="RHEA:10736"/>
        <dbReference type="ChEBI" id="CHEBI:15378"/>
        <dbReference type="ChEBI" id="CHEBI:15734"/>
        <dbReference type="ChEBI" id="CHEBI:17478"/>
        <dbReference type="ChEBI" id="CHEBI:57540"/>
        <dbReference type="ChEBI" id="CHEBI:57945"/>
        <dbReference type="EC" id="1.1.1.1"/>
    </reaction>
</comment>
<comment type="catalytic activity">
    <reaction>
        <text>a secondary alcohol + NAD(+) = a ketone + NADH + H(+)</text>
        <dbReference type="Rhea" id="RHEA:10740"/>
        <dbReference type="ChEBI" id="CHEBI:15378"/>
        <dbReference type="ChEBI" id="CHEBI:17087"/>
        <dbReference type="ChEBI" id="CHEBI:35681"/>
        <dbReference type="ChEBI" id="CHEBI:57540"/>
        <dbReference type="ChEBI" id="CHEBI:57945"/>
        <dbReference type="EC" id="1.1.1.1"/>
    </reaction>
</comment>
<comment type="cofactor">
    <cofactor evidence="1">
        <name>Zn(2+)</name>
        <dbReference type="ChEBI" id="CHEBI:29105"/>
    </cofactor>
    <text evidence="1">Binds 2 Zn(2+) ions per subunit.</text>
</comment>
<comment type="subcellular location">
    <subcellularLocation>
        <location>Cytoplasm</location>
    </subcellularLocation>
</comment>
<comment type="similarity">
    <text evidence="3">Belongs to the zinc-containing alcohol dehydrogenase family. Class-I subfamily.</text>
</comment>
<reference key="1">
    <citation type="journal article" date="1991" name="Biochemistry">
        <title>Amphibian alcohol dehydrogenase, the major frog liver enzyme. Relationships to other forms and assessment of an early gene duplication separating vertebrate class I and class III alcohol dehydrogenases.</title>
        <authorList>
            <person name="Cederlund E."/>
            <person name="Peralba J.M."/>
            <person name="Pares X."/>
            <person name="Joernvall H."/>
        </authorList>
    </citation>
    <scope>PROTEIN SEQUENCE</scope>
    <scope>ACETYLATION AT ALA-1</scope>
    <source>
        <tissue>Liver</tissue>
    </source>
</reference>
<reference key="2">
    <citation type="journal article" date="1990" name="FEBS Lett.">
        <title>Fast atom bombardment mass spectrometry and chemical analysis in determinations of acyl-blocked protein structures.</title>
        <authorList>
            <person name="Egestad B."/>
            <person name="Estonius M."/>
            <person name="Danielsson O."/>
            <person name="Persson B."/>
            <person name="Cederlund E."/>
            <person name="Kaiser R."/>
            <person name="Holmquist B."/>
            <person name="Vallee B."/>
            <person name="Pares X."/>
            <person name="Jefferey J."/>
            <person name="Joernvall H."/>
        </authorList>
    </citation>
    <scope>PROTEIN SEQUENCE OF 1-5</scope>
</reference>
<accession>P22797</accession>
<protein>
    <recommendedName>
        <fullName>Alcohol dehydrogenase 1</fullName>
        <ecNumber>1.1.1.1</ecNumber>
    </recommendedName>
    <alternativeName>
        <fullName>Alcohol dehydrogenase, major</fullName>
    </alternativeName>
</protein>
<dbReference type="EC" id="1.1.1.1"/>
<dbReference type="PIR" id="A38405">
    <property type="entry name" value="A38405"/>
</dbReference>
<dbReference type="PIR" id="S11075">
    <property type="entry name" value="S11075"/>
</dbReference>
<dbReference type="SMR" id="P22797"/>
<dbReference type="iPTMnet" id="P22797"/>
<dbReference type="GO" id="GO:0005829">
    <property type="term" value="C:cytosol"/>
    <property type="evidence" value="ECO:0007669"/>
    <property type="project" value="TreeGrafter"/>
</dbReference>
<dbReference type="GO" id="GO:0004745">
    <property type="term" value="F:all-trans-retinol dehydrogenase (NAD+) activity"/>
    <property type="evidence" value="ECO:0007669"/>
    <property type="project" value="TreeGrafter"/>
</dbReference>
<dbReference type="GO" id="GO:0008270">
    <property type="term" value="F:zinc ion binding"/>
    <property type="evidence" value="ECO:0007669"/>
    <property type="project" value="InterPro"/>
</dbReference>
<dbReference type="GO" id="GO:0042573">
    <property type="term" value="P:retinoic acid metabolic process"/>
    <property type="evidence" value="ECO:0007669"/>
    <property type="project" value="TreeGrafter"/>
</dbReference>
<dbReference type="GO" id="GO:0042572">
    <property type="term" value="P:retinol metabolic process"/>
    <property type="evidence" value="ECO:0007669"/>
    <property type="project" value="TreeGrafter"/>
</dbReference>
<dbReference type="CDD" id="cd08299">
    <property type="entry name" value="alcohol_DH_class_I_II_IV"/>
    <property type="match status" value="1"/>
</dbReference>
<dbReference type="FunFam" id="3.40.50.720:FF:000003">
    <property type="entry name" value="S-(hydroxymethyl)glutathione dehydrogenase"/>
    <property type="match status" value="1"/>
</dbReference>
<dbReference type="FunFam" id="3.90.180.10:FF:000001">
    <property type="entry name" value="S-(hydroxymethyl)glutathione dehydrogenase"/>
    <property type="match status" value="1"/>
</dbReference>
<dbReference type="Gene3D" id="3.90.180.10">
    <property type="entry name" value="Medium-chain alcohol dehydrogenases, catalytic domain"/>
    <property type="match status" value="1"/>
</dbReference>
<dbReference type="Gene3D" id="3.40.50.720">
    <property type="entry name" value="NAD(P)-binding Rossmann-like Domain"/>
    <property type="match status" value="1"/>
</dbReference>
<dbReference type="InterPro" id="IPR013149">
    <property type="entry name" value="ADH-like_C"/>
</dbReference>
<dbReference type="InterPro" id="IPR013154">
    <property type="entry name" value="ADH-like_N"/>
</dbReference>
<dbReference type="InterPro" id="IPR002328">
    <property type="entry name" value="ADH_Zn_CS"/>
</dbReference>
<dbReference type="InterPro" id="IPR011032">
    <property type="entry name" value="GroES-like_sf"/>
</dbReference>
<dbReference type="InterPro" id="IPR036291">
    <property type="entry name" value="NAD(P)-bd_dom_sf"/>
</dbReference>
<dbReference type="InterPro" id="IPR020843">
    <property type="entry name" value="PKS_ER"/>
</dbReference>
<dbReference type="PANTHER" id="PTHR43880">
    <property type="entry name" value="ALCOHOL DEHYDROGENASE"/>
    <property type="match status" value="1"/>
</dbReference>
<dbReference type="PANTHER" id="PTHR43880:SF1">
    <property type="entry name" value="ALCOHOL DEHYDROGENASE 1A"/>
    <property type="match status" value="1"/>
</dbReference>
<dbReference type="Pfam" id="PF08240">
    <property type="entry name" value="ADH_N"/>
    <property type="match status" value="1"/>
</dbReference>
<dbReference type="Pfam" id="PF00107">
    <property type="entry name" value="ADH_zinc_N"/>
    <property type="match status" value="1"/>
</dbReference>
<dbReference type="SMART" id="SM00829">
    <property type="entry name" value="PKS_ER"/>
    <property type="match status" value="1"/>
</dbReference>
<dbReference type="SUPFAM" id="SSF50129">
    <property type="entry name" value="GroES-like"/>
    <property type="match status" value="2"/>
</dbReference>
<dbReference type="SUPFAM" id="SSF51735">
    <property type="entry name" value="NAD(P)-binding Rossmann-fold domains"/>
    <property type="match status" value="1"/>
</dbReference>
<dbReference type="PROSITE" id="PS00059">
    <property type="entry name" value="ADH_ZINC"/>
    <property type="match status" value="1"/>
</dbReference>
<evidence type="ECO:0000250" key="1"/>
<evidence type="ECO:0000269" key="2">
    <source>
    </source>
</evidence>
<evidence type="ECO:0000305" key="3"/>
<sequence length="375" mass="40185">ATAGKVIKCKAAVCWGPKQPLSIEEIEVAPPKRHEVRVKIVATGICRSDDHVISGALSDMKFPVILGHEAAGVVESVGEGVTKFKPGDKVIPLFVPQCGECRCCKNPESNLCYKNDIGKYDGVLLDKTSRFTCKGKSIHNFISTSTFTEYTVLDEIAVAKIHEDAPLEKVCLIGCGFSTGYGSAVNTGKVKPGSTCAVFGLGGVGLSVIIGCKVAGASRIIGVDLNSDKFTTAKECGATECINPKDYNIPIHEVLAKMTDDGVDYAFEVIGNTTVMTSALSSSHFGCGKTVIVGLAPSSAVMSFDPLLILTGRILTGAVFGGWKSKDDVPKLVRDYLNKKFDFDPLITHYMPFEKINEGFELLRNGKSIRTILTF</sequence>
<feature type="chain" id="PRO_0000160680" description="Alcohol dehydrogenase 1">
    <location>
        <begin position="1"/>
        <end position="375"/>
    </location>
</feature>
<feature type="binding site" evidence="1">
    <location>
        <position position="46"/>
    </location>
    <ligand>
        <name>Zn(2+)</name>
        <dbReference type="ChEBI" id="CHEBI:29105"/>
        <label>1</label>
        <note>catalytic</note>
    </ligand>
</feature>
<feature type="binding site" evidence="1">
    <location>
        <position position="68"/>
    </location>
    <ligand>
        <name>Zn(2+)</name>
        <dbReference type="ChEBI" id="CHEBI:29105"/>
        <label>1</label>
        <note>catalytic</note>
    </ligand>
</feature>
<feature type="binding site" evidence="1">
    <location>
        <position position="98"/>
    </location>
    <ligand>
        <name>Zn(2+)</name>
        <dbReference type="ChEBI" id="CHEBI:29105"/>
        <label>2</label>
    </ligand>
</feature>
<feature type="binding site" evidence="1">
    <location>
        <position position="101"/>
    </location>
    <ligand>
        <name>Zn(2+)</name>
        <dbReference type="ChEBI" id="CHEBI:29105"/>
        <label>2</label>
    </ligand>
</feature>
<feature type="binding site" evidence="1">
    <location>
        <position position="104"/>
    </location>
    <ligand>
        <name>Zn(2+)</name>
        <dbReference type="ChEBI" id="CHEBI:29105"/>
        <label>2</label>
    </ligand>
</feature>
<feature type="binding site" evidence="1">
    <location>
        <position position="112"/>
    </location>
    <ligand>
        <name>Zn(2+)</name>
        <dbReference type="ChEBI" id="CHEBI:29105"/>
        <label>2</label>
    </ligand>
</feature>
<feature type="binding site" evidence="1">
    <location>
        <position position="175"/>
    </location>
    <ligand>
        <name>Zn(2+)</name>
        <dbReference type="ChEBI" id="CHEBI:29105"/>
        <label>1</label>
        <note>catalytic</note>
    </ligand>
</feature>
<feature type="binding site" evidence="1">
    <location>
        <begin position="200"/>
        <end position="205"/>
    </location>
    <ligand>
        <name>NAD(+)</name>
        <dbReference type="ChEBI" id="CHEBI:57540"/>
    </ligand>
</feature>
<feature type="binding site" evidence="1">
    <location>
        <position position="224"/>
    </location>
    <ligand>
        <name>NAD(+)</name>
        <dbReference type="ChEBI" id="CHEBI:57540"/>
    </ligand>
</feature>
<feature type="binding site" evidence="1">
    <location>
        <position position="229"/>
    </location>
    <ligand>
        <name>NAD(+)</name>
        <dbReference type="ChEBI" id="CHEBI:57540"/>
    </ligand>
</feature>
<feature type="binding site" evidence="1">
    <location>
        <begin position="293"/>
        <end position="295"/>
    </location>
    <ligand>
        <name>NAD(+)</name>
        <dbReference type="ChEBI" id="CHEBI:57540"/>
    </ligand>
</feature>
<feature type="binding site" evidence="1">
    <location>
        <position position="370"/>
    </location>
    <ligand>
        <name>NAD(+)</name>
        <dbReference type="ChEBI" id="CHEBI:57540"/>
    </ligand>
</feature>
<feature type="modified residue" description="N-acetylalanine" evidence="2">
    <location>
        <position position="1"/>
    </location>
</feature>
<name>ADH1_PELPE</name>
<keyword id="KW-0007">Acetylation</keyword>
<keyword id="KW-0963">Cytoplasm</keyword>
<keyword id="KW-0903">Direct protein sequencing</keyword>
<keyword id="KW-0479">Metal-binding</keyword>
<keyword id="KW-0520">NAD</keyword>
<keyword id="KW-0560">Oxidoreductase</keyword>
<keyword id="KW-0862">Zinc</keyword>
<organism>
    <name type="scientific">Pelophylax perezi</name>
    <name type="common">Perez's frog</name>
    <name type="synonym">Rana perezi</name>
    <dbReference type="NCBI Taxonomy" id="8403"/>
    <lineage>
        <taxon>Eukaryota</taxon>
        <taxon>Metazoa</taxon>
        <taxon>Chordata</taxon>
        <taxon>Craniata</taxon>
        <taxon>Vertebrata</taxon>
        <taxon>Euteleostomi</taxon>
        <taxon>Amphibia</taxon>
        <taxon>Batrachia</taxon>
        <taxon>Anura</taxon>
        <taxon>Neobatrachia</taxon>
        <taxon>Ranoidea</taxon>
        <taxon>Ranidae</taxon>
        <taxon>Pelophylax</taxon>
    </lineage>
</organism>
<proteinExistence type="evidence at protein level"/>